<organism>
    <name type="scientific">Canis lupus familiaris</name>
    <name type="common">Dog</name>
    <name type="synonym">Canis familiaris</name>
    <dbReference type="NCBI Taxonomy" id="9615"/>
    <lineage>
        <taxon>Eukaryota</taxon>
        <taxon>Metazoa</taxon>
        <taxon>Chordata</taxon>
        <taxon>Craniata</taxon>
        <taxon>Vertebrata</taxon>
        <taxon>Euteleostomi</taxon>
        <taxon>Mammalia</taxon>
        <taxon>Eutheria</taxon>
        <taxon>Laurasiatheria</taxon>
        <taxon>Carnivora</taxon>
        <taxon>Caniformia</taxon>
        <taxon>Canidae</taxon>
        <taxon>Canis</taxon>
    </lineage>
</organism>
<dbReference type="EMBL" id="U41002">
    <property type="protein sequence ID" value="AAA84001.1"/>
    <property type="molecule type" value="mRNA"/>
</dbReference>
<dbReference type="RefSeq" id="NP_001003299.1">
    <property type="nucleotide sequence ID" value="NM_001003299.1"/>
</dbReference>
<dbReference type="SMR" id="Q28266"/>
<dbReference type="FunCoup" id="Q28266">
    <property type="interactions" value="2"/>
</dbReference>
<dbReference type="STRING" id="9615.ENSCAFP00000024942"/>
<dbReference type="GlyCosmos" id="Q28266">
    <property type="glycosylation" value="2 sites, No reported glycans"/>
</dbReference>
<dbReference type="PaxDb" id="9612-ENSCAFP00000024942"/>
<dbReference type="GeneID" id="403983"/>
<dbReference type="KEGG" id="cfa:403983"/>
<dbReference type="CTD" id="3779"/>
<dbReference type="eggNOG" id="ENOG502RZA0">
    <property type="taxonomic scope" value="Eukaryota"/>
</dbReference>
<dbReference type="InParanoid" id="Q28266"/>
<dbReference type="OrthoDB" id="5962477at2759"/>
<dbReference type="Proteomes" id="UP000002254">
    <property type="component" value="Unplaced"/>
</dbReference>
<dbReference type="Proteomes" id="UP000694429">
    <property type="component" value="Unplaced"/>
</dbReference>
<dbReference type="Proteomes" id="UP000694542">
    <property type="component" value="Unplaced"/>
</dbReference>
<dbReference type="Proteomes" id="UP000805418">
    <property type="component" value="Unplaced"/>
</dbReference>
<dbReference type="GO" id="GO:0008076">
    <property type="term" value="C:voltage-gated potassium channel complex"/>
    <property type="evidence" value="ECO:0000318"/>
    <property type="project" value="GO_Central"/>
</dbReference>
<dbReference type="GO" id="GO:0015269">
    <property type="term" value="F:calcium-activated potassium channel activity"/>
    <property type="evidence" value="ECO:0000318"/>
    <property type="project" value="GO_Central"/>
</dbReference>
<dbReference type="GO" id="GO:0015459">
    <property type="term" value="F:potassium channel regulator activity"/>
    <property type="evidence" value="ECO:0000318"/>
    <property type="project" value="GO_Central"/>
</dbReference>
<dbReference type="GO" id="GO:0005513">
    <property type="term" value="P:detection of calcium ion"/>
    <property type="evidence" value="ECO:0000318"/>
    <property type="project" value="GO_Central"/>
</dbReference>
<dbReference type="InterPro" id="IPR003930">
    <property type="entry name" value="K_chnl_Ca-activ_BK_bsu"/>
</dbReference>
<dbReference type="PANTHER" id="PTHR10258">
    <property type="entry name" value="CALCIUM-ACTIVATED POTASSIUM CHANNEL SUBUNIT BETA"/>
    <property type="match status" value="1"/>
</dbReference>
<dbReference type="PANTHER" id="PTHR10258:SF1">
    <property type="entry name" value="CALCIUM-ACTIVATED POTASSIUM CHANNEL SUBUNIT BETA-1"/>
    <property type="match status" value="1"/>
</dbReference>
<dbReference type="Pfam" id="PF03185">
    <property type="entry name" value="CaKB"/>
    <property type="match status" value="1"/>
</dbReference>
<dbReference type="PRINTS" id="PR01450">
    <property type="entry name" value="BKCHANNELB"/>
</dbReference>
<evidence type="ECO:0000250" key="1"/>
<evidence type="ECO:0000255" key="2"/>
<evidence type="ECO:0000305" key="3"/>
<sequence length="191" mass="21935">MGKKLVMAQKRGETRALCLGVAMVMCAVIAYYILGTTMLPLYQKSVWTQKSTCHLIETNIREQEELEGKKVPQYPCLWVNVSAVGRWAVLYHTEDTRDQNHQCSYIPGSLENYQVARADVEKVKAKFHEQQIFYCFSTTRENETTVLYRRLYGPQTLLFSLFWPTFLLTGGLLIIAMVKINQSLSILAAQR</sequence>
<gene>
    <name type="primary">KCNMB1</name>
</gene>
<proteinExistence type="evidence at transcript level"/>
<feature type="chain" id="PRO_0000187045" description="Calcium-activated potassium channel subunit beta-1">
    <location>
        <begin position="1"/>
        <end position="191"/>
    </location>
</feature>
<feature type="topological domain" description="Cytoplasmic" evidence="2">
    <location>
        <begin position="1"/>
        <end position="15"/>
    </location>
</feature>
<feature type="transmembrane region" description="Helical; Name=1" evidence="2">
    <location>
        <begin position="16"/>
        <end position="36"/>
    </location>
</feature>
<feature type="topological domain" description="Extracellular" evidence="2">
    <location>
        <begin position="37"/>
        <end position="157"/>
    </location>
</feature>
<feature type="transmembrane region" description="Helical; Name=2" evidence="2">
    <location>
        <begin position="158"/>
        <end position="178"/>
    </location>
</feature>
<feature type="topological domain" description="Cytoplasmic" evidence="2">
    <location>
        <begin position="179"/>
        <end position="191"/>
    </location>
</feature>
<feature type="glycosylation site" description="N-linked (GlcNAc...) asparagine" evidence="2">
    <location>
        <position position="80"/>
    </location>
</feature>
<feature type="glycosylation site" description="N-linked (GlcNAc...) asparagine" evidence="2">
    <location>
        <position position="142"/>
    </location>
</feature>
<reference key="1">
    <citation type="journal article" date="1996" name="Am. J. Physiol.">
        <title>Cloning and expression of the large-conductance Ca(2+)-activated K+ channel from colonic smooth muscle.</title>
        <authorList>
            <person name="Vogalis F."/>
            <person name="Vincent T."/>
            <person name="Qureshi I."/>
            <person name="Schmalz F.M."/>
            <person name="Ward M.W."/>
            <person name="Sanders K.M."/>
            <person name="Horowitz B."/>
        </authorList>
    </citation>
    <scope>NUCLEOTIDE SEQUENCE [MRNA]</scope>
</reference>
<name>KCMB1_CANLF</name>
<protein>
    <recommendedName>
        <fullName>Calcium-activated potassium channel subunit beta-1</fullName>
    </recommendedName>
    <alternativeName>
        <fullName>BK channel subunit beta-1</fullName>
        <shortName>BKbeta</shortName>
        <shortName>BKbeta1</shortName>
    </alternativeName>
    <alternativeName>
        <fullName>Calcium-activated potassium channel, subfamily M subunit beta-1</fullName>
        <shortName>Calcium-activated potassium channel subunit beta</shortName>
    </alternativeName>
    <alternativeName>
        <fullName>Charybdotoxin receptor subunit beta-1</fullName>
    </alternativeName>
    <alternativeName>
        <fullName>K(VCA)beta-1</fullName>
    </alternativeName>
    <alternativeName>
        <fullName>Maxi K channel subunit beta-1</fullName>
    </alternativeName>
    <alternativeName>
        <fullName>Slo-beta-1</fullName>
        <shortName>Slo-beta</shortName>
    </alternativeName>
</protein>
<keyword id="KW-0325">Glycoprotein</keyword>
<keyword id="KW-0407">Ion channel</keyword>
<keyword id="KW-0406">Ion transport</keyword>
<keyword id="KW-0472">Membrane</keyword>
<keyword id="KW-1185">Reference proteome</keyword>
<keyword id="KW-0812">Transmembrane</keyword>
<keyword id="KW-1133">Transmembrane helix</keyword>
<keyword id="KW-0813">Transport</keyword>
<accession>Q28266</accession>
<comment type="function">
    <text evidence="1">Regulatory subunit of the calcium activated potassium KCNMA1 (maxiK) channel. Modulates the calcium sensitivity and gating kinetics of KCNMA1, thereby contributing to KCNMA1 channel diversity. Increases the apparent Ca(2+)/voltage sensitivity of the KCNMA1 channel. It also modifies KCNMA1 channel kinetics and alters its pharmacological properties. It slows down the activation and the deactivation kinetics of the channel. Acts as a negative regulator of smooth muscle contraction by enhancing the calcium sensitivity to KCNMA1. Its presence is also a requirement for internal binding of the KCNMA1 channel opener dehydrosoyasaponin I (DHS-1) triterpene glycoside and for external binding of the agonist hormone 17-beta-estradiol (E2). Increases the binding activity of charybdotoxin (CTX) toxin to KCNMA1 peptide blocker by increasing the CTX association rate and decreasing the dissociation rate (By similarity).</text>
</comment>
<comment type="subunit">
    <text evidence="1">Interacts with KCNMA1 tetramer. There are probably 4 molecules of KCMNB1 per KCNMA1 tetramer (By similarity).</text>
</comment>
<comment type="subcellular location">
    <subcellularLocation>
        <location evidence="1">Membrane</location>
        <topology evidence="1">Multi-pass membrane protein</topology>
    </subcellularLocation>
</comment>
<comment type="PTM">
    <text evidence="1">N-glycosylated.</text>
</comment>
<comment type="similarity">
    <text evidence="3">Belongs to the KCNMB (TC 8.A.14.1) family. KCNMB1 subfamily.</text>
</comment>